<dbReference type="EMBL" id="CP000312">
    <property type="protein sequence ID" value="ABG86686.1"/>
    <property type="molecule type" value="Genomic_DNA"/>
</dbReference>
<dbReference type="RefSeq" id="WP_003452315.1">
    <property type="nucleotide sequence ID" value="NZ_CAXVKH010000010.1"/>
</dbReference>
<dbReference type="SMR" id="Q0SQY1"/>
<dbReference type="GeneID" id="93001256"/>
<dbReference type="KEGG" id="cpr:CPR_2176"/>
<dbReference type="Proteomes" id="UP000001824">
    <property type="component" value="Chromosome"/>
</dbReference>
<dbReference type="GO" id="GO:0005737">
    <property type="term" value="C:cytoplasm"/>
    <property type="evidence" value="ECO:0007669"/>
    <property type="project" value="UniProtKB-SubCell"/>
</dbReference>
<dbReference type="GO" id="GO:0016149">
    <property type="term" value="F:translation release factor activity, codon specific"/>
    <property type="evidence" value="ECO:0007669"/>
    <property type="project" value="UniProtKB-UniRule"/>
</dbReference>
<dbReference type="FunFam" id="3.30.160.20:FF:000004">
    <property type="entry name" value="Peptide chain release factor 1"/>
    <property type="match status" value="1"/>
</dbReference>
<dbReference type="FunFam" id="3.30.70.1660:FF:000002">
    <property type="entry name" value="Peptide chain release factor 1"/>
    <property type="match status" value="1"/>
</dbReference>
<dbReference type="FunFam" id="3.30.70.1660:FF:000004">
    <property type="entry name" value="Peptide chain release factor 1"/>
    <property type="match status" value="1"/>
</dbReference>
<dbReference type="Gene3D" id="3.30.160.20">
    <property type="match status" value="1"/>
</dbReference>
<dbReference type="Gene3D" id="3.30.70.1660">
    <property type="match status" value="1"/>
</dbReference>
<dbReference type="Gene3D" id="6.10.140.1950">
    <property type="match status" value="1"/>
</dbReference>
<dbReference type="HAMAP" id="MF_00093">
    <property type="entry name" value="Rel_fac_1"/>
    <property type="match status" value="1"/>
</dbReference>
<dbReference type="InterPro" id="IPR005139">
    <property type="entry name" value="PCRF"/>
</dbReference>
<dbReference type="InterPro" id="IPR000352">
    <property type="entry name" value="Pep_chain_release_fac_I"/>
</dbReference>
<dbReference type="InterPro" id="IPR045853">
    <property type="entry name" value="Pep_chain_release_fac_I_sf"/>
</dbReference>
<dbReference type="InterPro" id="IPR050057">
    <property type="entry name" value="Prokaryotic/Mito_RF"/>
</dbReference>
<dbReference type="InterPro" id="IPR004373">
    <property type="entry name" value="RF-1"/>
</dbReference>
<dbReference type="NCBIfam" id="TIGR00019">
    <property type="entry name" value="prfA"/>
    <property type="match status" value="1"/>
</dbReference>
<dbReference type="NCBIfam" id="NF001859">
    <property type="entry name" value="PRK00591.1"/>
    <property type="match status" value="1"/>
</dbReference>
<dbReference type="PANTHER" id="PTHR43804">
    <property type="entry name" value="LD18447P"/>
    <property type="match status" value="1"/>
</dbReference>
<dbReference type="PANTHER" id="PTHR43804:SF7">
    <property type="entry name" value="LD18447P"/>
    <property type="match status" value="1"/>
</dbReference>
<dbReference type="Pfam" id="PF03462">
    <property type="entry name" value="PCRF"/>
    <property type="match status" value="1"/>
</dbReference>
<dbReference type="Pfam" id="PF00472">
    <property type="entry name" value="RF-1"/>
    <property type="match status" value="1"/>
</dbReference>
<dbReference type="SMART" id="SM00937">
    <property type="entry name" value="PCRF"/>
    <property type="match status" value="1"/>
</dbReference>
<dbReference type="SUPFAM" id="SSF75620">
    <property type="entry name" value="Release factor"/>
    <property type="match status" value="1"/>
</dbReference>
<dbReference type="PROSITE" id="PS00745">
    <property type="entry name" value="RF_PROK_I"/>
    <property type="match status" value="1"/>
</dbReference>
<gene>
    <name evidence="1" type="primary">prfA</name>
    <name type="ordered locus">CPR_2176</name>
</gene>
<proteinExistence type="inferred from homology"/>
<feature type="chain" id="PRO_0000263257" description="Peptide chain release factor 1">
    <location>
        <begin position="1"/>
        <end position="360"/>
    </location>
</feature>
<feature type="modified residue" description="N5-methylglutamine" evidence="1">
    <location>
        <position position="234"/>
    </location>
</feature>
<sequence>MILDRLNFIENKYDELSVKISDPSIMANQKEWRKLCKEHADLEVIVNKYKEYKEATEELEANKEMLSEESDQEMREMINSEIKDLTERKKELEDEIQILLLPKDPNDDKNVFVEIRGGAGGDEAALFAANLFRMYTKYAEKNRWKVELMSANETDIGGFKEVVFMIKGAGAYSKLKYESGAHRVQRVPDTESSGRIHTSTATVAVLPEVDDVEIEINDKDIKIDVFRASGNGGQCVNTTDSAVRITHLPSGLVVSCQDEKSQLKNKEKAMKVLRARLFEQAEAERLAGIAEDRKSQVGTGDRSERIRTYNYPQGRVTDHRINMTLYKLDSFLEGDIDEILNALITEDQAQKMKAMGNTEF</sequence>
<keyword id="KW-0963">Cytoplasm</keyword>
<keyword id="KW-0488">Methylation</keyword>
<keyword id="KW-0648">Protein biosynthesis</keyword>
<comment type="function">
    <text evidence="1">Peptide chain release factor 1 directs the termination of translation in response to the peptide chain termination codons UAG and UAA.</text>
</comment>
<comment type="subcellular location">
    <subcellularLocation>
        <location evidence="1">Cytoplasm</location>
    </subcellularLocation>
</comment>
<comment type="PTM">
    <text evidence="1">Methylated by PrmC. Methylation increases the termination efficiency of RF1.</text>
</comment>
<comment type="similarity">
    <text evidence="1">Belongs to the prokaryotic/mitochondrial release factor family.</text>
</comment>
<reference key="1">
    <citation type="journal article" date="2006" name="Genome Res.">
        <title>Skewed genomic variability in strains of the toxigenic bacterial pathogen, Clostridium perfringens.</title>
        <authorList>
            <person name="Myers G.S.A."/>
            <person name="Rasko D.A."/>
            <person name="Cheung J.K."/>
            <person name="Ravel J."/>
            <person name="Seshadri R."/>
            <person name="DeBoy R.T."/>
            <person name="Ren Q."/>
            <person name="Varga J."/>
            <person name="Awad M.M."/>
            <person name="Brinkac L.M."/>
            <person name="Daugherty S.C."/>
            <person name="Haft D.H."/>
            <person name="Dodson R.J."/>
            <person name="Madupu R."/>
            <person name="Nelson W.C."/>
            <person name="Rosovitz M.J."/>
            <person name="Sullivan S.A."/>
            <person name="Khouri H."/>
            <person name="Dimitrov G.I."/>
            <person name="Watkins K.L."/>
            <person name="Mulligan S."/>
            <person name="Benton J."/>
            <person name="Radune D."/>
            <person name="Fisher D.J."/>
            <person name="Atkins H.S."/>
            <person name="Hiscox T."/>
            <person name="Jost B.H."/>
            <person name="Billington S.J."/>
            <person name="Songer J.G."/>
            <person name="McClane B.A."/>
            <person name="Titball R.W."/>
            <person name="Rood J.I."/>
            <person name="Melville S.B."/>
            <person name="Paulsen I.T."/>
        </authorList>
    </citation>
    <scope>NUCLEOTIDE SEQUENCE [LARGE SCALE GENOMIC DNA]</scope>
    <source>
        <strain>SM101 / Type A</strain>
    </source>
</reference>
<protein>
    <recommendedName>
        <fullName evidence="1">Peptide chain release factor 1</fullName>
        <shortName evidence="1">RF-1</shortName>
    </recommendedName>
</protein>
<accession>Q0SQY1</accession>
<name>RF1_CLOPS</name>
<organism>
    <name type="scientific">Clostridium perfringens (strain SM101 / Type A)</name>
    <dbReference type="NCBI Taxonomy" id="289380"/>
    <lineage>
        <taxon>Bacteria</taxon>
        <taxon>Bacillati</taxon>
        <taxon>Bacillota</taxon>
        <taxon>Clostridia</taxon>
        <taxon>Eubacteriales</taxon>
        <taxon>Clostridiaceae</taxon>
        <taxon>Clostridium</taxon>
    </lineage>
</organism>
<evidence type="ECO:0000255" key="1">
    <source>
        <dbReference type="HAMAP-Rule" id="MF_00093"/>
    </source>
</evidence>